<evidence type="ECO:0000250" key="1"/>
<evidence type="ECO:0000305" key="2"/>
<dbReference type="EC" id="1.14.-.-"/>
<dbReference type="EMBL" id="M19352">
    <property type="protein sequence ID" value="AAA82502.1"/>
    <property type="molecule type" value="Genomic_DNA"/>
</dbReference>
<dbReference type="PIR" id="A32306">
    <property type="entry name" value="A32306"/>
</dbReference>
<dbReference type="RefSeq" id="NP_059794.1">
    <property type="nucleotide sequence ID" value="NC_002377.1"/>
</dbReference>
<dbReference type="RefSeq" id="WP_010892482.1">
    <property type="nucleotide sequence ID" value="NZ_QSNU01000012.1"/>
</dbReference>
<dbReference type="SMR" id="P24466"/>
<dbReference type="OrthoDB" id="9801155at2"/>
<dbReference type="GO" id="GO:0020037">
    <property type="term" value="F:heme binding"/>
    <property type="evidence" value="ECO:0007669"/>
    <property type="project" value="InterPro"/>
</dbReference>
<dbReference type="GO" id="GO:0005506">
    <property type="term" value="F:iron ion binding"/>
    <property type="evidence" value="ECO:0007669"/>
    <property type="project" value="InterPro"/>
</dbReference>
<dbReference type="GO" id="GO:0004497">
    <property type="term" value="F:monooxygenase activity"/>
    <property type="evidence" value="ECO:0007669"/>
    <property type="project" value="UniProtKB-KW"/>
</dbReference>
<dbReference type="GO" id="GO:0016705">
    <property type="term" value="F:oxidoreductase activity, acting on paired donors, with incorporation or reduction of molecular oxygen"/>
    <property type="evidence" value="ECO:0007669"/>
    <property type="project" value="InterPro"/>
</dbReference>
<dbReference type="CDD" id="cd20629">
    <property type="entry name" value="P450_pinF1-like"/>
    <property type="match status" value="1"/>
</dbReference>
<dbReference type="Gene3D" id="1.10.630.10">
    <property type="entry name" value="Cytochrome P450"/>
    <property type="match status" value="1"/>
</dbReference>
<dbReference type="InterPro" id="IPR001128">
    <property type="entry name" value="Cyt_P450"/>
</dbReference>
<dbReference type="InterPro" id="IPR002397">
    <property type="entry name" value="Cyt_P450_B"/>
</dbReference>
<dbReference type="InterPro" id="IPR017972">
    <property type="entry name" value="Cyt_P450_CS"/>
</dbReference>
<dbReference type="InterPro" id="IPR036396">
    <property type="entry name" value="Cyt_P450_sf"/>
</dbReference>
<dbReference type="PANTHER" id="PTHR46696:SF1">
    <property type="entry name" value="CYTOCHROME P450 YJIB-RELATED"/>
    <property type="match status" value="1"/>
</dbReference>
<dbReference type="PANTHER" id="PTHR46696">
    <property type="entry name" value="P450, PUTATIVE (EUROFUNG)-RELATED"/>
    <property type="match status" value="1"/>
</dbReference>
<dbReference type="Pfam" id="PF00067">
    <property type="entry name" value="p450"/>
    <property type="match status" value="1"/>
</dbReference>
<dbReference type="PRINTS" id="PR00359">
    <property type="entry name" value="BP450"/>
</dbReference>
<dbReference type="PRINTS" id="PR00385">
    <property type="entry name" value="P450"/>
</dbReference>
<dbReference type="SUPFAM" id="SSF48264">
    <property type="entry name" value="Cytochrome P450"/>
    <property type="match status" value="1"/>
</dbReference>
<dbReference type="PROSITE" id="PS00086">
    <property type="entry name" value="CYTOCHROME_P450"/>
    <property type="match status" value="1"/>
</dbReference>
<feature type="chain" id="PRO_0000052211" description="Cytochrome P450-pinF1, plant-inducible">
    <location>
        <begin position="1"/>
        <end position="422"/>
    </location>
</feature>
<feature type="binding site" description="axial binding residue" evidence="1">
    <location>
        <position position="369"/>
    </location>
    <ligand>
        <name>heme</name>
        <dbReference type="ChEBI" id="CHEBI:30413"/>
    </ligand>
    <ligandPart>
        <name>Fe</name>
        <dbReference type="ChEBI" id="CHEBI:18248"/>
    </ligandPart>
</feature>
<keyword id="KW-0349">Heme</keyword>
<keyword id="KW-0408">Iron</keyword>
<keyword id="KW-0479">Metal-binding</keyword>
<keyword id="KW-0503">Monooxygenase</keyword>
<keyword id="KW-0560">Oxidoreductase</keyword>
<keyword id="KW-0614">Plasmid</keyword>
<accession>P24466</accession>
<reference key="1">
    <citation type="journal article" date="1989" name="J. Bacteriol.">
        <title>Nucleotide sequence and analysis of the plant-inducible locus pinF from Agrobacterium tumefaciens.</title>
        <authorList>
            <person name="Kanemoto R.H."/>
            <person name="Powell A.T."/>
            <person name="Akiyoshi D.E."/>
            <person name="Regier D.A."/>
            <person name="Kerstetter R.A."/>
            <person name="Nester E.W."/>
            <person name="Hawes M.C."/>
            <person name="Gordon M.P."/>
        </authorList>
    </citation>
    <scope>NUCLEOTIDE SEQUENCE [GENOMIC DNA]</scope>
</reference>
<protein>
    <recommendedName>
        <fullName>Cytochrome P450-pinF1, plant-inducible</fullName>
        <ecNumber>1.14.-.-</ecNumber>
    </recommendedName>
</protein>
<proteinExistence type="evidence at transcript level"/>
<sequence length="422" mass="47520">MIANSSTDVSVADQKFLNVAKSNQIDPDAVPISRLDSEGHSIFAEWRPKRPFLRREDGIFLVLRADHIFLLGTDPRTRQIETELMLNRGVKAGAVFDFIDHSMLFSNGETHGKRRSGLSKAFSFRMVEALRPEIAKITECLWDDLQKVDDFNFTEMYASQLPALTIASVLGLPSEDTPFFTRLVYKVSRCLSPSWRDEEFEEIEASAIELQDYVRSVIADSGRRMRDDFLSRYLKAVREAGTLSPIEEIMQLMLIILAGSDTTRTAMVMVTALALQNPALWSSLRGNQSYVAAAVEEGLRFEPPVGSFPRLALKDIDLDGYVLPKGSLLALSVMSGLRDEKHYEHPQLFDVGRQQMRWHLGFGAGVHRCLGETLARIELQEGLRTLLRRAPNLAVVGDWPRMMGHGGIRRATDMMVKLSFDL</sequence>
<organism>
    <name type="scientific">Rhizobium radiobacter</name>
    <name type="common">Agrobacterium tumefaciens</name>
    <name type="synonym">Agrobacterium radiobacter</name>
    <dbReference type="NCBI Taxonomy" id="358"/>
    <lineage>
        <taxon>Bacteria</taxon>
        <taxon>Pseudomonadati</taxon>
        <taxon>Pseudomonadota</taxon>
        <taxon>Alphaproteobacteria</taxon>
        <taxon>Hyphomicrobiales</taxon>
        <taxon>Rhizobiaceae</taxon>
        <taxon>Rhizobium/Agrobacterium group</taxon>
        <taxon>Agrobacterium</taxon>
        <taxon>Agrobacterium tumefaciens complex</taxon>
    </lineage>
</organism>
<name>CPXC_RHIRD</name>
<gene>
    <name type="primary">cyp103</name>
    <name type="synonym">pinF1</name>
    <name type="synonym">virH1</name>
</gene>
<geneLocation type="plasmid">
    <name>pTiA6</name>
</geneLocation>
<comment type="function">
    <text>Not essential for virulence, but may be involved in the detoxification of plant protective agents at the site of wounding.</text>
</comment>
<comment type="cofactor">
    <cofactor evidence="1">
        <name>heme</name>
        <dbReference type="ChEBI" id="CHEBI:30413"/>
    </cofactor>
</comment>
<comment type="induction">
    <text>Transcriptionally activated in the presence of wounded plant tissue and by plant phenolic compounds, such as acetosyringone.</text>
</comment>
<comment type="similarity">
    <text evidence="2">Belongs to the cytochrome P450 family.</text>
</comment>